<gene>
    <name type="primary">PDC2</name>
    <name type="ordered locus">At5g54960</name>
    <name type="ORF">MBG8.23</name>
</gene>
<sequence>MDTKIGSIDACNPTNHDIGGPPNGGVSTVQNTSPLHSTTVSPCDATLGRYLARRLVEIGVTDVFSVPGDFNLTLLDHLIAEPNLKLIGCCNELNAGYAADGYARSRGVGACVVTFTVGGLSVLNAIAGAYSENLPLICIVGGPNSNDYGTNRILHHTIGLPDFTQELRCFQAVTCFQAVINNLEEAHELIDTAISTALKESKPVYISISCNLPAIPLPTFSRHPVPFMLPMKVSNQIGLDAAVEAAAEFLNKAVKPVLVGGPKMRVAKAADAFVELADASGYGLAVMPSAKGQVPEHHKHFIGTYWGAVSTAFCAEIVESADAYLFAGPIFNDYSSVGYSLLLKKEKAIIVQPDRVTIGNGPAFGCVLMKDFLSELAKRIKHNNTSYENYHRIYVPEGKPLRDNPNESLRVNVLFQHIQNMLSSESAVLAETGDSWFNCQKLKLPEGCGYEFQMQYGSIGWSVGATLGYAQAMPNRRVIACIGDGSFQVTAQDVSTMIRCGQKTIIFLINNGGYTIEVEIHDGPYNVIKNWNYTAFVEAIHNGEGKCWTAKVRCEEELVKAINTATNEEKESFCFIEVIVHKDDTSKELLEWGSRVSAANSRPPNPQ</sequence>
<dbReference type="EC" id="4.1.1.1"/>
<dbReference type="EMBL" id="U71122">
    <property type="protein sequence ID" value="AAB16855.1"/>
    <property type="molecule type" value="Genomic_DNA"/>
</dbReference>
<dbReference type="EMBL" id="AB005232">
    <property type="protein sequence ID" value="BAB08775.1"/>
    <property type="molecule type" value="Genomic_DNA"/>
</dbReference>
<dbReference type="EMBL" id="CP002688">
    <property type="protein sequence ID" value="AED96563.1"/>
    <property type="molecule type" value="Genomic_DNA"/>
</dbReference>
<dbReference type="EMBL" id="BX830776">
    <property type="status" value="NOT_ANNOTATED_CDS"/>
    <property type="molecule type" value="mRNA"/>
</dbReference>
<dbReference type="RefSeq" id="NP_200307.1">
    <property type="nucleotide sequence ID" value="NM_124878.3"/>
</dbReference>
<dbReference type="SMR" id="Q9FFT4"/>
<dbReference type="BioGRID" id="20831">
    <property type="interactions" value="9"/>
</dbReference>
<dbReference type="FunCoup" id="Q9FFT4">
    <property type="interactions" value="204"/>
</dbReference>
<dbReference type="STRING" id="3702.Q9FFT4"/>
<dbReference type="PaxDb" id="3702-AT5G54960.1"/>
<dbReference type="ProMEX" id="Q9FFT4"/>
<dbReference type="ProteomicsDB" id="236329"/>
<dbReference type="EnsemblPlants" id="AT5G54960.1">
    <property type="protein sequence ID" value="AT5G54960.1"/>
    <property type="gene ID" value="AT5G54960"/>
</dbReference>
<dbReference type="GeneID" id="835587"/>
<dbReference type="Gramene" id="AT5G54960.1">
    <property type="protein sequence ID" value="AT5G54960.1"/>
    <property type="gene ID" value="AT5G54960"/>
</dbReference>
<dbReference type="KEGG" id="ath:AT5G54960"/>
<dbReference type="Araport" id="AT5G54960"/>
<dbReference type="TAIR" id="AT5G54960">
    <property type="gene designation" value="PDC2"/>
</dbReference>
<dbReference type="eggNOG" id="KOG1184">
    <property type="taxonomic scope" value="Eukaryota"/>
</dbReference>
<dbReference type="HOGENOM" id="CLU_013748_0_2_1"/>
<dbReference type="InParanoid" id="Q9FFT4"/>
<dbReference type="OMA" id="FTCAQAN"/>
<dbReference type="PhylomeDB" id="Q9FFT4"/>
<dbReference type="BioCyc" id="ARA:AT5G54960-MONOMER"/>
<dbReference type="BRENDA" id="4.1.1.1">
    <property type="organism ID" value="399"/>
</dbReference>
<dbReference type="PRO" id="PR:Q9FFT4"/>
<dbReference type="Proteomes" id="UP000006548">
    <property type="component" value="Chromosome 5"/>
</dbReference>
<dbReference type="ExpressionAtlas" id="Q9FFT4">
    <property type="expression patterns" value="baseline and differential"/>
</dbReference>
<dbReference type="GO" id="GO:0005829">
    <property type="term" value="C:cytosol"/>
    <property type="evidence" value="ECO:0007005"/>
    <property type="project" value="TAIR"/>
</dbReference>
<dbReference type="GO" id="GO:0009536">
    <property type="term" value="C:plastid"/>
    <property type="evidence" value="ECO:0007005"/>
    <property type="project" value="TAIR"/>
</dbReference>
<dbReference type="GO" id="GO:0000287">
    <property type="term" value="F:magnesium ion binding"/>
    <property type="evidence" value="ECO:0007669"/>
    <property type="project" value="InterPro"/>
</dbReference>
<dbReference type="GO" id="GO:0004737">
    <property type="term" value="F:pyruvate decarboxylase activity"/>
    <property type="evidence" value="ECO:0007669"/>
    <property type="project" value="UniProtKB-EC"/>
</dbReference>
<dbReference type="GO" id="GO:0030976">
    <property type="term" value="F:thiamine pyrophosphate binding"/>
    <property type="evidence" value="ECO:0007669"/>
    <property type="project" value="InterPro"/>
</dbReference>
<dbReference type="GO" id="GO:0071456">
    <property type="term" value="P:cellular response to hypoxia"/>
    <property type="evidence" value="ECO:0007007"/>
    <property type="project" value="TAIR"/>
</dbReference>
<dbReference type="GO" id="GO:0001666">
    <property type="term" value="P:response to hypoxia"/>
    <property type="evidence" value="ECO:0000270"/>
    <property type="project" value="TAIR"/>
</dbReference>
<dbReference type="CDD" id="cd02005">
    <property type="entry name" value="TPP_PDC_IPDC"/>
    <property type="match status" value="1"/>
</dbReference>
<dbReference type="CDD" id="cd07038">
    <property type="entry name" value="TPP_PYR_PDC_IPDC_like"/>
    <property type="match status" value="1"/>
</dbReference>
<dbReference type="FunFam" id="3.40.50.1220:FF:000009">
    <property type="entry name" value="Pyruvate decarboxylase 1"/>
    <property type="match status" value="1"/>
</dbReference>
<dbReference type="FunFam" id="3.40.50.970:FF:000021">
    <property type="entry name" value="Pyruvate decarboxylase 1"/>
    <property type="match status" value="1"/>
</dbReference>
<dbReference type="FunFam" id="3.40.50.970:FF:000017">
    <property type="entry name" value="pyruvate decarboxylase 1"/>
    <property type="match status" value="1"/>
</dbReference>
<dbReference type="Gene3D" id="3.40.50.970">
    <property type="match status" value="2"/>
</dbReference>
<dbReference type="Gene3D" id="3.40.50.1220">
    <property type="entry name" value="TPP-binding domain"/>
    <property type="match status" value="1"/>
</dbReference>
<dbReference type="InterPro" id="IPR029035">
    <property type="entry name" value="DHS-like_NAD/FAD-binding_dom"/>
</dbReference>
<dbReference type="InterPro" id="IPR012110">
    <property type="entry name" value="PDC/IPDC-like"/>
</dbReference>
<dbReference type="InterPro" id="IPR029061">
    <property type="entry name" value="THDP-binding"/>
</dbReference>
<dbReference type="InterPro" id="IPR012000">
    <property type="entry name" value="Thiamin_PyroP_enz_cen_dom"/>
</dbReference>
<dbReference type="InterPro" id="IPR012001">
    <property type="entry name" value="Thiamin_PyroP_enz_TPP-bd_dom"/>
</dbReference>
<dbReference type="InterPro" id="IPR011766">
    <property type="entry name" value="TPP_enzyme_TPP-bd"/>
</dbReference>
<dbReference type="InterPro" id="IPR047214">
    <property type="entry name" value="TPP_PDC_IPDC"/>
</dbReference>
<dbReference type="InterPro" id="IPR047213">
    <property type="entry name" value="TPP_PYR_PDC_IPDC-like"/>
</dbReference>
<dbReference type="PANTHER" id="PTHR43452">
    <property type="entry name" value="PYRUVATE DECARBOXYLASE"/>
    <property type="match status" value="1"/>
</dbReference>
<dbReference type="PANTHER" id="PTHR43452:SF6">
    <property type="entry name" value="PYRUVATE DECARBOXYLASE 2"/>
    <property type="match status" value="1"/>
</dbReference>
<dbReference type="Pfam" id="PF02775">
    <property type="entry name" value="TPP_enzyme_C"/>
    <property type="match status" value="1"/>
</dbReference>
<dbReference type="Pfam" id="PF00205">
    <property type="entry name" value="TPP_enzyme_M"/>
    <property type="match status" value="1"/>
</dbReference>
<dbReference type="Pfam" id="PF02776">
    <property type="entry name" value="TPP_enzyme_N"/>
    <property type="match status" value="1"/>
</dbReference>
<dbReference type="PIRSF" id="PIRSF036565">
    <property type="entry name" value="Pyruvt_ip_decrb"/>
    <property type="match status" value="1"/>
</dbReference>
<dbReference type="SUPFAM" id="SSF52467">
    <property type="entry name" value="DHS-like NAD/FAD-binding domain"/>
    <property type="match status" value="1"/>
</dbReference>
<dbReference type="SUPFAM" id="SSF52518">
    <property type="entry name" value="Thiamin diphosphate-binding fold (THDP-binding)"/>
    <property type="match status" value="2"/>
</dbReference>
<evidence type="ECO:0000250" key="1"/>
<evidence type="ECO:0000256" key="2">
    <source>
        <dbReference type="SAM" id="MobiDB-lite"/>
    </source>
</evidence>
<evidence type="ECO:0000269" key="3">
    <source>
    </source>
</evidence>
<evidence type="ECO:0000305" key="4"/>
<comment type="catalytic activity">
    <reaction>
        <text>a 2-oxocarboxylate + H(+) = an aldehyde + CO2</text>
        <dbReference type="Rhea" id="RHEA:11628"/>
        <dbReference type="ChEBI" id="CHEBI:15378"/>
        <dbReference type="ChEBI" id="CHEBI:16526"/>
        <dbReference type="ChEBI" id="CHEBI:17478"/>
        <dbReference type="ChEBI" id="CHEBI:35179"/>
        <dbReference type="EC" id="4.1.1.1"/>
    </reaction>
</comment>
<comment type="cofactor">
    <cofactor>
        <name>a metal cation</name>
        <dbReference type="ChEBI" id="CHEBI:25213"/>
    </cofactor>
    <text>Binds 1 metal ion per subunit.</text>
</comment>
<comment type="cofactor">
    <cofactor>
        <name>thiamine diphosphate</name>
        <dbReference type="ChEBI" id="CHEBI:58937"/>
    </cofactor>
    <text>Binds 1 thiamine pyrophosphate per subunit.</text>
</comment>
<comment type="subunit">
    <text evidence="4">Homotetramer.</text>
</comment>
<comment type="tissue specificity">
    <text evidence="3">Expressed at low levels in roots, shoots, flowers, siliques and seeds.</text>
</comment>
<comment type="induction">
    <text evidence="3">By abscisic acid (ABA), salt, osmotic stress, wounding and paraquat. Not induced by anoxia.</text>
</comment>
<comment type="similarity">
    <text evidence="4">Belongs to the TPP enzyme family.</text>
</comment>
<comment type="sequence caution" evidence="4">
    <conflict type="miscellaneous discrepancy">
        <sequence resource="EMBL" id="BX830776"/>
    </conflict>
    <text>Sequencing errors.</text>
</comment>
<reference key="1">
    <citation type="submission" date="1996-09" db="EMBL/GenBank/DDBJ databases">
        <title>Two pyruvate decarboxylase genes from Arabidopsis.</title>
        <authorList>
            <person name="Dolferus R."/>
            <person name="Peacock W.J."/>
            <person name="Dennis E.S."/>
        </authorList>
    </citation>
    <scope>NUCLEOTIDE SEQUENCE [GENOMIC DNA]</scope>
    <source>
        <strain>cv. Landsberg erecta</strain>
    </source>
</reference>
<reference key="2">
    <citation type="journal article" date="1997" name="DNA Res.">
        <title>Structural analysis of Arabidopsis thaliana chromosome 5. I. Sequence features of the 1.6 Mb regions covered by twenty physically assigned P1 clones.</title>
        <authorList>
            <person name="Sato S."/>
            <person name="Kotani H."/>
            <person name="Nakamura Y."/>
            <person name="Kaneko T."/>
            <person name="Asamizu E."/>
            <person name="Fukami M."/>
            <person name="Miyajima N."/>
            <person name="Tabata S."/>
        </authorList>
    </citation>
    <scope>NUCLEOTIDE SEQUENCE [LARGE SCALE GENOMIC DNA]</scope>
    <source>
        <strain>cv. Columbia</strain>
    </source>
</reference>
<reference key="3">
    <citation type="journal article" date="2017" name="Plant J.">
        <title>Araport11: a complete reannotation of the Arabidopsis thaliana reference genome.</title>
        <authorList>
            <person name="Cheng C.Y."/>
            <person name="Krishnakumar V."/>
            <person name="Chan A.P."/>
            <person name="Thibaud-Nissen F."/>
            <person name="Schobel S."/>
            <person name="Town C.D."/>
        </authorList>
    </citation>
    <scope>GENOME REANNOTATION</scope>
    <source>
        <strain>cv. Columbia</strain>
    </source>
</reference>
<reference key="4">
    <citation type="journal article" date="2004" name="Genome Res.">
        <title>Whole genome sequence comparisons and 'full-length' cDNA sequences: a combined approach to evaluate and improve Arabidopsis genome annotation.</title>
        <authorList>
            <person name="Castelli V."/>
            <person name="Aury J.-M."/>
            <person name="Jaillon O."/>
            <person name="Wincker P."/>
            <person name="Clepet C."/>
            <person name="Menard M."/>
            <person name="Cruaud C."/>
            <person name="Quetier F."/>
            <person name="Scarpelli C."/>
            <person name="Schaechter V."/>
            <person name="Temple G."/>
            <person name="Caboche M."/>
            <person name="Weissenbach J."/>
            <person name="Salanoubat M."/>
        </authorList>
    </citation>
    <scope>NUCLEOTIDE SEQUENCE [LARGE SCALE MRNA]</scope>
    <source>
        <strain>cv. Columbia</strain>
    </source>
</reference>
<reference key="5">
    <citation type="journal article" date="2003" name="Plant Physiol.">
        <title>The pyruvate decarboxylase1 gene of Arabidopsis is required during anoxia but not other environmental stresses.</title>
        <authorList>
            <person name="Kuersteiner O."/>
            <person name="Dupuis I."/>
            <person name="Kuhlemeier C."/>
        </authorList>
    </citation>
    <scope>TISSUE SPECIFICITY</scope>
    <scope>INDUCTION</scope>
</reference>
<organism>
    <name type="scientific">Arabidopsis thaliana</name>
    <name type="common">Mouse-ear cress</name>
    <dbReference type="NCBI Taxonomy" id="3702"/>
    <lineage>
        <taxon>Eukaryota</taxon>
        <taxon>Viridiplantae</taxon>
        <taxon>Streptophyta</taxon>
        <taxon>Embryophyta</taxon>
        <taxon>Tracheophyta</taxon>
        <taxon>Spermatophyta</taxon>
        <taxon>Magnoliopsida</taxon>
        <taxon>eudicotyledons</taxon>
        <taxon>Gunneridae</taxon>
        <taxon>Pentapetalae</taxon>
        <taxon>rosids</taxon>
        <taxon>malvids</taxon>
        <taxon>Brassicales</taxon>
        <taxon>Brassicaceae</taxon>
        <taxon>Camelineae</taxon>
        <taxon>Arabidopsis</taxon>
    </lineage>
</organism>
<name>PDC2_ARATH</name>
<proteinExistence type="evidence at transcript level"/>
<accession>Q9FFT4</accession>
<accession>Q96536</accession>
<feature type="chain" id="PRO_0000422313" description="Pyruvate decarboxylase 2">
    <location>
        <begin position="1"/>
        <end position="607"/>
    </location>
</feature>
<feature type="region of interest" description="Disordered" evidence="2">
    <location>
        <begin position="1"/>
        <end position="22"/>
    </location>
</feature>
<feature type="region of interest" description="Thiamine pyrophosphate binding" evidence="1">
    <location>
        <begin position="434"/>
        <end position="516"/>
    </location>
</feature>
<feature type="binding site" evidence="1">
    <location>
        <position position="69"/>
    </location>
    <ligand>
        <name>substrate</name>
    </ligand>
</feature>
<feature type="binding site" evidence="1">
    <location>
        <position position="156"/>
    </location>
    <ligand>
        <name>substrate</name>
    </ligand>
</feature>
<feature type="binding site" evidence="1">
    <location>
        <position position="484"/>
    </location>
    <ligand>
        <name>Mg(2+)</name>
        <dbReference type="ChEBI" id="CHEBI:18420"/>
    </ligand>
</feature>
<feature type="binding site" evidence="1">
    <location>
        <position position="511"/>
    </location>
    <ligand>
        <name>Mg(2+)</name>
        <dbReference type="ChEBI" id="CHEBI:18420"/>
    </ligand>
</feature>
<feature type="binding site" evidence="1">
    <location>
        <position position="513"/>
    </location>
    <ligand>
        <name>Mg(2+)</name>
        <dbReference type="ChEBI" id="CHEBI:18420"/>
    </ligand>
</feature>
<feature type="binding site" evidence="1">
    <location>
        <position position="517"/>
    </location>
    <ligand>
        <name>substrate</name>
    </ligand>
</feature>
<feature type="sequence conflict" description="In Ref. 1; AAB16855." evidence="4" ref="1">
    <original>L</original>
    <variation>F</variation>
    <location>
        <position position="368"/>
    </location>
</feature>
<feature type="sequence conflict" description="In Ref. 1; AAB16855." evidence="4" ref="1">
    <original>T</original>
    <variation>P</variation>
    <location>
        <position position="496"/>
    </location>
</feature>
<feature type="sequence conflict" description="In Ref. 1; AAB16855." evidence="4" ref="1">
    <original>Q</original>
    <variation>H</variation>
    <location>
        <position position="502"/>
    </location>
</feature>
<feature type="sequence conflict" description="In Ref. 1; AAB16855." evidence="4" ref="1">
    <original>A</original>
    <variation>P</variation>
    <location>
        <position position="550"/>
    </location>
</feature>
<protein>
    <recommendedName>
        <fullName>Pyruvate decarboxylase 2</fullName>
        <shortName>AtPDC2</shortName>
        <ecNumber>4.1.1.1</ecNumber>
    </recommendedName>
</protein>
<keyword id="KW-0210">Decarboxylase</keyword>
<keyword id="KW-0456">Lyase</keyword>
<keyword id="KW-0460">Magnesium</keyword>
<keyword id="KW-0479">Metal-binding</keyword>
<keyword id="KW-0670">Pyruvate</keyword>
<keyword id="KW-1185">Reference proteome</keyword>
<keyword id="KW-0346">Stress response</keyword>
<keyword id="KW-0786">Thiamine pyrophosphate</keyword>